<organism>
    <name type="scientific">Arabidopsis thaliana</name>
    <name type="common">Mouse-ear cress</name>
    <dbReference type="NCBI Taxonomy" id="3702"/>
    <lineage>
        <taxon>Eukaryota</taxon>
        <taxon>Viridiplantae</taxon>
        <taxon>Streptophyta</taxon>
        <taxon>Embryophyta</taxon>
        <taxon>Tracheophyta</taxon>
        <taxon>Spermatophyta</taxon>
        <taxon>Magnoliopsida</taxon>
        <taxon>eudicotyledons</taxon>
        <taxon>Gunneridae</taxon>
        <taxon>Pentapetalae</taxon>
        <taxon>rosids</taxon>
        <taxon>malvids</taxon>
        <taxon>Brassicales</taxon>
        <taxon>Brassicaceae</taxon>
        <taxon>Camelineae</taxon>
        <taxon>Arabidopsis</taxon>
    </lineage>
</organism>
<protein>
    <recommendedName>
        <fullName>Pentatricopeptide repeat-containing protein At4g33170</fullName>
    </recommendedName>
</protein>
<comment type="similarity">
    <text evidence="1">Belongs to the PPR family. PCMP-H subfamily.</text>
</comment>
<comment type="online information" name="Pentatricopeptide repeat proteins">
    <link uri="https://ppr.plantenergy.uwa.edu.au"/>
</comment>
<evidence type="ECO:0000305" key="1"/>
<keyword id="KW-1185">Reference proteome</keyword>
<keyword id="KW-0677">Repeat</keyword>
<reference key="1">
    <citation type="journal article" date="1999" name="Nature">
        <title>Sequence and analysis of chromosome 4 of the plant Arabidopsis thaliana.</title>
        <authorList>
            <person name="Mayer K.F.X."/>
            <person name="Schueller C."/>
            <person name="Wambutt R."/>
            <person name="Murphy G."/>
            <person name="Volckaert G."/>
            <person name="Pohl T."/>
            <person name="Duesterhoeft A."/>
            <person name="Stiekema W."/>
            <person name="Entian K.-D."/>
            <person name="Terryn N."/>
            <person name="Harris B."/>
            <person name="Ansorge W."/>
            <person name="Brandt P."/>
            <person name="Grivell L.A."/>
            <person name="Rieger M."/>
            <person name="Weichselgartner M."/>
            <person name="de Simone V."/>
            <person name="Obermaier B."/>
            <person name="Mache R."/>
            <person name="Mueller M."/>
            <person name="Kreis M."/>
            <person name="Delseny M."/>
            <person name="Puigdomenech P."/>
            <person name="Watson M."/>
            <person name="Schmidtheini T."/>
            <person name="Reichert B."/>
            <person name="Portetelle D."/>
            <person name="Perez-Alonso M."/>
            <person name="Boutry M."/>
            <person name="Bancroft I."/>
            <person name="Vos P."/>
            <person name="Hoheisel J."/>
            <person name="Zimmermann W."/>
            <person name="Wedler H."/>
            <person name="Ridley P."/>
            <person name="Langham S.-A."/>
            <person name="McCullagh B."/>
            <person name="Bilham L."/>
            <person name="Robben J."/>
            <person name="van der Schueren J."/>
            <person name="Grymonprez B."/>
            <person name="Chuang Y.-J."/>
            <person name="Vandenbussche F."/>
            <person name="Braeken M."/>
            <person name="Weltjens I."/>
            <person name="Voet M."/>
            <person name="Bastiaens I."/>
            <person name="Aert R."/>
            <person name="Defoor E."/>
            <person name="Weitzenegger T."/>
            <person name="Bothe G."/>
            <person name="Ramsperger U."/>
            <person name="Hilbert H."/>
            <person name="Braun M."/>
            <person name="Holzer E."/>
            <person name="Brandt A."/>
            <person name="Peters S."/>
            <person name="van Staveren M."/>
            <person name="Dirkse W."/>
            <person name="Mooijman P."/>
            <person name="Klein Lankhorst R."/>
            <person name="Rose M."/>
            <person name="Hauf J."/>
            <person name="Koetter P."/>
            <person name="Berneiser S."/>
            <person name="Hempel S."/>
            <person name="Feldpausch M."/>
            <person name="Lamberth S."/>
            <person name="Van den Daele H."/>
            <person name="De Keyser A."/>
            <person name="Buysshaert C."/>
            <person name="Gielen J."/>
            <person name="Villarroel R."/>
            <person name="De Clercq R."/>
            <person name="van Montagu M."/>
            <person name="Rogers J."/>
            <person name="Cronin A."/>
            <person name="Quail M.A."/>
            <person name="Bray-Allen S."/>
            <person name="Clark L."/>
            <person name="Doggett J."/>
            <person name="Hall S."/>
            <person name="Kay M."/>
            <person name="Lennard N."/>
            <person name="McLay K."/>
            <person name="Mayes R."/>
            <person name="Pettett A."/>
            <person name="Rajandream M.A."/>
            <person name="Lyne M."/>
            <person name="Benes V."/>
            <person name="Rechmann S."/>
            <person name="Borkova D."/>
            <person name="Bloecker H."/>
            <person name="Scharfe M."/>
            <person name="Grimm M."/>
            <person name="Loehnert T.-H."/>
            <person name="Dose S."/>
            <person name="de Haan M."/>
            <person name="Maarse A.C."/>
            <person name="Schaefer M."/>
            <person name="Mueller-Auer S."/>
            <person name="Gabel C."/>
            <person name="Fuchs M."/>
            <person name="Fartmann B."/>
            <person name="Granderath K."/>
            <person name="Dauner D."/>
            <person name="Herzl A."/>
            <person name="Neumann S."/>
            <person name="Argiriou A."/>
            <person name="Vitale D."/>
            <person name="Liguori R."/>
            <person name="Piravandi E."/>
            <person name="Massenet O."/>
            <person name="Quigley F."/>
            <person name="Clabauld G."/>
            <person name="Muendlein A."/>
            <person name="Felber R."/>
            <person name="Schnabl S."/>
            <person name="Hiller R."/>
            <person name="Schmidt W."/>
            <person name="Lecharny A."/>
            <person name="Aubourg S."/>
            <person name="Chefdor F."/>
            <person name="Cooke R."/>
            <person name="Berger C."/>
            <person name="Monfort A."/>
            <person name="Casacuberta E."/>
            <person name="Gibbons T."/>
            <person name="Weber N."/>
            <person name="Vandenbol M."/>
            <person name="Bargues M."/>
            <person name="Terol J."/>
            <person name="Torres A."/>
            <person name="Perez-Perez A."/>
            <person name="Purnelle B."/>
            <person name="Bent E."/>
            <person name="Johnson S."/>
            <person name="Tacon D."/>
            <person name="Jesse T."/>
            <person name="Heijnen L."/>
            <person name="Schwarz S."/>
            <person name="Scholler P."/>
            <person name="Heber S."/>
            <person name="Francs P."/>
            <person name="Bielke C."/>
            <person name="Frishman D."/>
            <person name="Haase D."/>
            <person name="Lemcke K."/>
            <person name="Mewes H.-W."/>
            <person name="Stocker S."/>
            <person name="Zaccaria P."/>
            <person name="Bevan M."/>
            <person name="Wilson R.K."/>
            <person name="de la Bastide M."/>
            <person name="Habermann K."/>
            <person name="Parnell L."/>
            <person name="Dedhia N."/>
            <person name="Gnoj L."/>
            <person name="Schutz K."/>
            <person name="Huang E."/>
            <person name="Spiegel L."/>
            <person name="Sekhon M."/>
            <person name="Murray J."/>
            <person name="Sheet P."/>
            <person name="Cordes M."/>
            <person name="Abu-Threideh J."/>
            <person name="Stoneking T."/>
            <person name="Kalicki J."/>
            <person name="Graves T."/>
            <person name="Harmon G."/>
            <person name="Edwards J."/>
            <person name="Latreille P."/>
            <person name="Courtney L."/>
            <person name="Cloud J."/>
            <person name="Abbott A."/>
            <person name="Scott K."/>
            <person name="Johnson D."/>
            <person name="Minx P."/>
            <person name="Bentley D."/>
            <person name="Fulton B."/>
            <person name="Miller N."/>
            <person name="Greco T."/>
            <person name="Kemp K."/>
            <person name="Kramer J."/>
            <person name="Fulton L."/>
            <person name="Mardis E."/>
            <person name="Dante M."/>
            <person name="Pepin K."/>
            <person name="Hillier L.W."/>
            <person name="Nelson J."/>
            <person name="Spieth J."/>
            <person name="Ryan E."/>
            <person name="Andrews S."/>
            <person name="Geisel C."/>
            <person name="Layman D."/>
            <person name="Du H."/>
            <person name="Ali J."/>
            <person name="Berghoff A."/>
            <person name="Jones K."/>
            <person name="Drone K."/>
            <person name="Cotton M."/>
            <person name="Joshu C."/>
            <person name="Antonoiu B."/>
            <person name="Zidanic M."/>
            <person name="Strong C."/>
            <person name="Sun H."/>
            <person name="Lamar B."/>
            <person name="Yordan C."/>
            <person name="Ma P."/>
            <person name="Zhong J."/>
            <person name="Preston R."/>
            <person name="Vil D."/>
            <person name="Shekher M."/>
            <person name="Matero A."/>
            <person name="Shah R."/>
            <person name="Swaby I.K."/>
            <person name="O'Shaughnessy A."/>
            <person name="Rodriguez M."/>
            <person name="Hoffman J."/>
            <person name="Till S."/>
            <person name="Granat S."/>
            <person name="Shohdy N."/>
            <person name="Hasegawa A."/>
            <person name="Hameed A."/>
            <person name="Lodhi M."/>
            <person name="Johnson A."/>
            <person name="Chen E."/>
            <person name="Marra M.A."/>
            <person name="Martienssen R."/>
            <person name="McCombie W.R."/>
        </authorList>
    </citation>
    <scope>NUCLEOTIDE SEQUENCE [LARGE SCALE GENOMIC DNA]</scope>
    <source>
        <strain>cv. Columbia</strain>
    </source>
</reference>
<reference key="2">
    <citation type="journal article" date="2017" name="Plant J.">
        <title>Araport11: a complete reannotation of the Arabidopsis thaliana reference genome.</title>
        <authorList>
            <person name="Cheng C.Y."/>
            <person name="Krishnakumar V."/>
            <person name="Chan A.P."/>
            <person name="Thibaud-Nissen F."/>
            <person name="Schobel S."/>
            <person name="Town C.D."/>
        </authorList>
    </citation>
    <scope>GENOME REANNOTATION</scope>
    <source>
        <strain>cv. Columbia</strain>
    </source>
</reference>
<reference key="3">
    <citation type="journal article" date="2000" name="Plant Mol. Biol.">
        <title>In Arabidopsis thaliana, 1% of the genome codes for a novel protein family unique to plants.</title>
        <authorList>
            <person name="Aubourg S."/>
            <person name="Boudet N."/>
            <person name="Kreis M."/>
            <person name="Lecharny A."/>
        </authorList>
    </citation>
    <scope>GENE FAMILY</scope>
</reference>
<reference key="4">
    <citation type="journal article" date="2004" name="Plant Cell">
        <title>Genome-wide analysis of Arabidopsis pentatricopeptide repeat proteins reveals their essential role in organelle biogenesis.</title>
        <authorList>
            <person name="Lurin C."/>
            <person name="Andres C."/>
            <person name="Aubourg S."/>
            <person name="Bellaoui M."/>
            <person name="Bitton F."/>
            <person name="Bruyere C."/>
            <person name="Caboche M."/>
            <person name="Debast C."/>
            <person name="Gualberto J."/>
            <person name="Hoffmann B."/>
            <person name="Lecharny A."/>
            <person name="Le Ret M."/>
            <person name="Martin-Magniette M.-L."/>
            <person name="Mireau H."/>
            <person name="Peeters N."/>
            <person name="Renou J.-P."/>
            <person name="Szurek B."/>
            <person name="Taconnat L."/>
            <person name="Small I."/>
        </authorList>
    </citation>
    <scope>GENE FAMILY</scope>
</reference>
<gene>
    <name type="primary">PCMP-H53</name>
    <name type="ordered locus">At4g33170</name>
    <name type="ORF">F4I10.100</name>
</gene>
<proteinExistence type="inferred from homology"/>
<dbReference type="EMBL" id="AL035525">
    <property type="protein sequence ID" value="CAB36791.1"/>
    <property type="molecule type" value="Genomic_DNA"/>
</dbReference>
<dbReference type="EMBL" id="AL161583">
    <property type="protein sequence ID" value="CAB80034.1"/>
    <property type="molecule type" value="Genomic_DNA"/>
</dbReference>
<dbReference type="EMBL" id="CP002687">
    <property type="protein sequence ID" value="AEE86186.1"/>
    <property type="molecule type" value="Genomic_DNA"/>
</dbReference>
<dbReference type="PIR" id="T05197">
    <property type="entry name" value="T05197"/>
</dbReference>
<dbReference type="RefSeq" id="NP_195043.1">
    <property type="nucleotide sequence ID" value="NM_119471.2"/>
</dbReference>
<dbReference type="SMR" id="Q9SMZ2"/>
<dbReference type="FunCoup" id="Q9SMZ2">
    <property type="interactions" value="7"/>
</dbReference>
<dbReference type="STRING" id="3702.Q9SMZ2"/>
<dbReference type="iPTMnet" id="Q9SMZ2"/>
<dbReference type="PaxDb" id="3702-AT4G33170.1"/>
<dbReference type="ProteomicsDB" id="248995"/>
<dbReference type="EnsemblPlants" id="AT4G33170.1">
    <property type="protein sequence ID" value="AT4G33170.1"/>
    <property type="gene ID" value="AT4G33170"/>
</dbReference>
<dbReference type="GeneID" id="829454"/>
<dbReference type="Gramene" id="AT4G33170.1">
    <property type="protein sequence ID" value="AT4G33170.1"/>
    <property type="gene ID" value="AT4G33170"/>
</dbReference>
<dbReference type="KEGG" id="ath:AT4G33170"/>
<dbReference type="Araport" id="AT4G33170"/>
<dbReference type="TAIR" id="AT4G33170"/>
<dbReference type="eggNOG" id="KOG4197">
    <property type="taxonomic scope" value="Eukaryota"/>
</dbReference>
<dbReference type="HOGENOM" id="CLU_002706_15_0_1"/>
<dbReference type="InParanoid" id="Q9SMZ2"/>
<dbReference type="OMA" id="AWEAVDC"/>
<dbReference type="PhylomeDB" id="Q9SMZ2"/>
<dbReference type="PRO" id="PR:Q9SMZ2"/>
<dbReference type="Proteomes" id="UP000006548">
    <property type="component" value="Chromosome 4"/>
</dbReference>
<dbReference type="ExpressionAtlas" id="Q9SMZ2">
    <property type="expression patterns" value="baseline and differential"/>
</dbReference>
<dbReference type="GO" id="GO:0003723">
    <property type="term" value="F:RNA binding"/>
    <property type="evidence" value="ECO:0007669"/>
    <property type="project" value="InterPro"/>
</dbReference>
<dbReference type="GO" id="GO:0008270">
    <property type="term" value="F:zinc ion binding"/>
    <property type="evidence" value="ECO:0007669"/>
    <property type="project" value="InterPro"/>
</dbReference>
<dbReference type="GO" id="GO:0009451">
    <property type="term" value="P:RNA modification"/>
    <property type="evidence" value="ECO:0007669"/>
    <property type="project" value="InterPro"/>
</dbReference>
<dbReference type="FunFam" id="1.25.40.10:FF:000366">
    <property type="entry name" value="Pentatricopeptide (PPR) repeat-containing protein"/>
    <property type="match status" value="1"/>
</dbReference>
<dbReference type="FunFam" id="1.25.40.10:FF:000343">
    <property type="entry name" value="Pentatricopeptide repeat-containing protein At3g58590"/>
    <property type="match status" value="1"/>
</dbReference>
<dbReference type="FunFam" id="1.25.40.10:FF:000687">
    <property type="entry name" value="Pentatricopeptide repeat-containing protein At4g33170"/>
    <property type="match status" value="1"/>
</dbReference>
<dbReference type="FunFam" id="1.25.40.10:FF:001086">
    <property type="entry name" value="Pentatricopeptide repeat-containing protein At4g33170"/>
    <property type="match status" value="1"/>
</dbReference>
<dbReference type="FunFam" id="1.25.40.10:FF:001396">
    <property type="entry name" value="Pentatricopeptide repeat-containing protein At4g33170"/>
    <property type="match status" value="1"/>
</dbReference>
<dbReference type="FunFam" id="1.25.40.10:FF:000243">
    <property type="entry name" value="Pentatricopeptide repeat-containing protein chloroplastic"/>
    <property type="match status" value="1"/>
</dbReference>
<dbReference type="Gene3D" id="1.25.40.10">
    <property type="entry name" value="Tetratricopeptide repeat domain"/>
    <property type="match status" value="6"/>
</dbReference>
<dbReference type="InterPro" id="IPR032867">
    <property type="entry name" value="DYW_dom"/>
</dbReference>
<dbReference type="InterPro" id="IPR046848">
    <property type="entry name" value="E_motif"/>
</dbReference>
<dbReference type="InterPro" id="IPR002885">
    <property type="entry name" value="Pentatricopeptide_rpt"/>
</dbReference>
<dbReference type="InterPro" id="IPR046960">
    <property type="entry name" value="PPR_At4g14850-like_plant"/>
</dbReference>
<dbReference type="InterPro" id="IPR011990">
    <property type="entry name" value="TPR-like_helical_dom_sf"/>
</dbReference>
<dbReference type="NCBIfam" id="TIGR00756">
    <property type="entry name" value="PPR"/>
    <property type="match status" value="5"/>
</dbReference>
<dbReference type="PANTHER" id="PTHR47926">
    <property type="entry name" value="PENTATRICOPEPTIDE REPEAT-CONTAINING PROTEIN"/>
    <property type="match status" value="1"/>
</dbReference>
<dbReference type="PANTHER" id="PTHR47926:SF347">
    <property type="entry name" value="PENTATRICOPEPTIDE REPEAT-CONTAINING PROTEIN"/>
    <property type="match status" value="1"/>
</dbReference>
<dbReference type="Pfam" id="PF14432">
    <property type="entry name" value="DYW_deaminase"/>
    <property type="match status" value="1"/>
</dbReference>
<dbReference type="Pfam" id="PF20431">
    <property type="entry name" value="E_motif"/>
    <property type="match status" value="1"/>
</dbReference>
<dbReference type="Pfam" id="PF01535">
    <property type="entry name" value="PPR"/>
    <property type="match status" value="8"/>
</dbReference>
<dbReference type="Pfam" id="PF13041">
    <property type="entry name" value="PPR_2"/>
    <property type="match status" value="2"/>
</dbReference>
<dbReference type="PROSITE" id="PS51375">
    <property type="entry name" value="PPR"/>
    <property type="match status" value="15"/>
</dbReference>
<name>PP347_ARATH</name>
<feature type="chain" id="PRO_0000363464" description="Pentatricopeptide repeat-containing protein At4g33170">
    <location>
        <begin position="1"/>
        <end position="990"/>
    </location>
</feature>
<feature type="repeat" description="PPR 1">
    <location>
        <begin position="73"/>
        <end position="107"/>
    </location>
</feature>
<feature type="repeat" description="PPR 2">
    <location>
        <begin position="109"/>
        <end position="139"/>
    </location>
</feature>
<feature type="repeat" description="PPR 3">
    <location>
        <begin position="144"/>
        <end position="178"/>
    </location>
</feature>
<feature type="repeat" description="PPR 4">
    <location>
        <begin position="179"/>
        <end position="209"/>
    </location>
</feature>
<feature type="repeat" description="PPR 5">
    <location>
        <begin position="210"/>
        <end position="244"/>
    </location>
</feature>
<feature type="repeat" description="PPR 6">
    <location>
        <begin position="279"/>
        <end position="313"/>
    </location>
</feature>
<feature type="repeat" description="PPR 7">
    <location>
        <begin position="314"/>
        <end position="348"/>
    </location>
</feature>
<feature type="repeat" description="PPR 8">
    <location>
        <begin position="349"/>
        <end position="379"/>
    </location>
</feature>
<feature type="repeat" description="PPR 9">
    <location>
        <begin position="380"/>
        <end position="414"/>
    </location>
</feature>
<feature type="repeat" description="PPR 10">
    <location>
        <begin position="415"/>
        <end position="450"/>
    </location>
</feature>
<feature type="repeat" description="PPR 11">
    <location>
        <begin position="451"/>
        <end position="477"/>
    </location>
</feature>
<feature type="repeat" description="PPR 12">
    <location>
        <begin position="481"/>
        <end position="515"/>
    </location>
</feature>
<feature type="repeat" description="PPR 13">
    <location>
        <begin position="516"/>
        <end position="550"/>
    </location>
</feature>
<feature type="repeat" description="PPR 14">
    <location>
        <begin position="551"/>
        <end position="581"/>
    </location>
</feature>
<feature type="repeat" description="PPR 15">
    <location>
        <begin position="582"/>
        <end position="616"/>
    </location>
</feature>
<feature type="repeat" description="PPR 16">
    <location>
        <begin position="617"/>
        <end position="651"/>
    </location>
</feature>
<feature type="repeat" description="PPR 17">
    <location>
        <begin position="652"/>
        <end position="682"/>
    </location>
</feature>
<feature type="repeat" description="PPR 18">
    <location>
        <begin position="683"/>
        <end position="717"/>
    </location>
</feature>
<feature type="repeat" description="PPR 19">
    <location>
        <begin position="718"/>
        <end position="753"/>
    </location>
</feature>
<feature type="repeat" description="PPR 20">
    <location>
        <begin position="754"/>
        <end position="788"/>
    </location>
</feature>
<feature type="region of interest" description="Type E motif">
    <location>
        <begin position="789"/>
        <end position="864"/>
    </location>
</feature>
<feature type="region of interest" description="Type E(+) motif">
    <location>
        <begin position="865"/>
        <end position="895"/>
    </location>
</feature>
<feature type="region of interest" description="Type DYW motif">
    <location>
        <begin position="896"/>
        <end position="990"/>
    </location>
</feature>
<accession>Q9SMZ2</accession>
<sequence>MRSTSKAIPFSFHTSLIVQCLRPLRFTSAASPSSSSSSSSQWFGFLRNAITSSDLMLGKCTHARILTFEENPERFLINNLISMYSKCGSLTYARRVFDKMPDRDLVSWNSILAAYAQSSECVVENIQQAFLLFRILRQDVVYTSRMTLSPMLKLCLHSGYVWASESFHGYACKIGLDGDEFVAGALVNIYLKFGKVKEGKVLFEEMPYRDVVLWNLMLKAYLEMGFKEEAIDLSSAFHSSGLNPNEITLRLLARISGDDSDAGQVKSFANGNDASSVSEIIFRNKGLSEYLHSGQYSALLKCFADMVESDVECDQVTFILMLATAVKVDSLALGQQVHCMALKLGLDLMLTVSNSLINMYCKLRKFGFARTVFDNMSERDLISWNSVIAGIAQNGLEVEAVCLFMQLLRCGLKPDQYTMTSVLKAASSLPEGLSLSKQVHVHAIKINNVSDSFVSTALIDAYSRNRCMKEAEILFERHNFDLVAWNAMMAGYTQSHDGHKTLKLFALMHKQGERSDDFTLATVFKTCGFLFAINQGKQVHAYAIKSGYDLDLWVSSGILDMYVKCGDMSAAQFAFDSIPVPDDVAWTTMISGCIENGEEERAFHVFSQMRLMGVLPDEFTIATLAKASSCLTALEQGRQIHANALKLNCTNDPFVGTSLVDMYAKCGSIDDAYCLFKRIEMMNITAWNAMLVGLAQHGEGKETLQLFKQMKSLGIKPDKVTFIGVLSACSHSGLVSEAYKHMRSMHGDYGIKPEIEHYSCLADALGRAGLVKQAENLIESMSMEASASMYRTLLAACRVQGDTETGKRVATKLLELEPLDSSAYVLLSNMYAAASKWDEMKLARTMMKGHKVKKDPGFSWIEVKNKIHIFVVDDRSNRQTELIYRKVKDMIRDIKQEGYVPETDFTLVDVEEEEKERALYYHSEKLAVAFGLLSTPPSTPIRVIKNLRVCGDCHNAMKYIAKVYNREIVLRDANRFHRFKDGICSCGDYW</sequence>